<proteinExistence type="inferred from homology"/>
<reference key="1">
    <citation type="journal article" date="2004" name="Nature">
        <title>Genome evolution in yeasts.</title>
        <authorList>
            <person name="Dujon B."/>
            <person name="Sherman D."/>
            <person name="Fischer G."/>
            <person name="Durrens P."/>
            <person name="Casaregola S."/>
            <person name="Lafontaine I."/>
            <person name="de Montigny J."/>
            <person name="Marck C."/>
            <person name="Neuveglise C."/>
            <person name="Talla E."/>
            <person name="Goffard N."/>
            <person name="Frangeul L."/>
            <person name="Aigle M."/>
            <person name="Anthouard V."/>
            <person name="Babour A."/>
            <person name="Barbe V."/>
            <person name="Barnay S."/>
            <person name="Blanchin S."/>
            <person name="Beckerich J.-M."/>
            <person name="Beyne E."/>
            <person name="Bleykasten C."/>
            <person name="Boisrame A."/>
            <person name="Boyer J."/>
            <person name="Cattolico L."/>
            <person name="Confanioleri F."/>
            <person name="de Daruvar A."/>
            <person name="Despons L."/>
            <person name="Fabre E."/>
            <person name="Fairhead C."/>
            <person name="Ferry-Dumazet H."/>
            <person name="Groppi A."/>
            <person name="Hantraye F."/>
            <person name="Hennequin C."/>
            <person name="Jauniaux N."/>
            <person name="Joyet P."/>
            <person name="Kachouri R."/>
            <person name="Kerrest A."/>
            <person name="Koszul R."/>
            <person name="Lemaire M."/>
            <person name="Lesur I."/>
            <person name="Ma L."/>
            <person name="Muller H."/>
            <person name="Nicaud J.-M."/>
            <person name="Nikolski M."/>
            <person name="Oztas S."/>
            <person name="Ozier-Kalogeropoulos O."/>
            <person name="Pellenz S."/>
            <person name="Potier S."/>
            <person name="Richard G.-F."/>
            <person name="Straub M.-L."/>
            <person name="Suleau A."/>
            <person name="Swennen D."/>
            <person name="Tekaia F."/>
            <person name="Wesolowski-Louvel M."/>
            <person name="Westhof E."/>
            <person name="Wirth B."/>
            <person name="Zeniou-Meyer M."/>
            <person name="Zivanovic Y."/>
            <person name="Bolotin-Fukuhara M."/>
            <person name="Thierry A."/>
            <person name="Bouchier C."/>
            <person name="Caudron B."/>
            <person name="Scarpelli C."/>
            <person name="Gaillardin C."/>
            <person name="Weissenbach J."/>
            <person name="Wincker P."/>
            <person name="Souciet J.-L."/>
        </authorList>
    </citation>
    <scope>NUCLEOTIDE SEQUENCE [LARGE SCALE GENOMIC DNA]</scope>
    <source>
        <strain>ATCC 8585 / CBS 2359 / DSM 70799 / NBRC 1267 / NRRL Y-1140 / WM37</strain>
    </source>
</reference>
<dbReference type="EMBL" id="CR382126">
    <property type="protein sequence ID" value="CAG98414.1"/>
    <property type="molecule type" value="Genomic_DNA"/>
</dbReference>
<dbReference type="RefSeq" id="XP_455706.1">
    <property type="nucleotide sequence ID" value="XM_455706.1"/>
</dbReference>
<dbReference type="FunCoup" id="Q6CK33">
    <property type="interactions" value="176"/>
</dbReference>
<dbReference type="STRING" id="284590.Q6CK33"/>
<dbReference type="PaxDb" id="284590-Q6CK33"/>
<dbReference type="KEGG" id="kla:KLLA0_F13904g"/>
<dbReference type="eggNOG" id="ENOG502R2ZP">
    <property type="taxonomic scope" value="Eukaryota"/>
</dbReference>
<dbReference type="HOGENOM" id="CLU_010748_2_2_1"/>
<dbReference type="InParanoid" id="Q6CK33"/>
<dbReference type="OMA" id="FCHEKHL"/>
<dbReference type="Proteomes" id="UP000000598">
    <property type="component" value="Chromosome F"/>
</dbReference>
<dbReference type="GO" id="GO:0005634">
    <property type="term" value="C:nucleus"/>
    <property type="evidence" value="ECO:0007669"/>
    <property type="project" value="UniProtKB-SubCell"/>
</dbReference>
<dbReference type="GO" id="GO:0000981">
    <property type="term" value="F:DNA-binding transcription factor activity, RNA polymerase II-specific"/>
    <property type="evidence" value="ECO:0007669"/>
    <property type="project" value="InterPro"/>
</dbReference>
<dbReference type="GO" id="GO:0000977">
    <property type="term" value="F:RNA polymerase II transcription regulatory region sequence-specific DNA binding"/>
    <property type="evidence" value="ECO:0007669"/>
    <property type="project" value="TreeGrafter"/>
</dbReference>
<dbReference type="GO" id="GO:0008270">
    <property type="term" value="F:zinc ion binding"/>
    <property type="evidence" value="ECO:0007669"/>
    <property type="project" value="InterPro"/>
</dbReference>
<dbReference type="GO" id="GO:0009267">
    <property type="term" value="P:cellular response to starvation"/>
    <property type="evidence" value="ECO:0007669"/>
    <property type="project" value="TreeGrafter"/>
</dbReference>
<dbReference type="CDD" id="cd00067">
    <property type="entry name" value="GAL4"/>
    <property type="match status" value="1"/>
</dbReference>
<dbReference type="Gene3D" id="4.10.240.10">
    <property type="entry name" value="Zn(2)-C6 fungal-type DNA-binding domain"/>
    <property type="match status" value="1"/>
</dbReference>
<dbReference type="InterPro" id="IPR050335">
    <property type="entry name" value="ERT1_acuK_gluconeogen_tf"/>
</dbReference>
<dbReference type="InterPro" id="IPR000014">
    <property type="entry name" value="PAS"/>
</dbReference>
<dbReference type="InterPro" id="IPR035965">
    <property type="entry name" value="PAS-like_dom_sf"/>
</dbReference>
<dbReference type="InterPro" id="IPR056751">
    <property type="entry name" value="PAS_13"/>
</dbReference>
<dbReference type="InterPro" id="IPR036864">
    <property type="entry name" value="Zn2-C6_fun-type_DNA-bd_sf"/>
</dbReference>
<dbReference type="InterPro" id="IPR001138">
    <property type="entry name" value="Zn2Cys6_DnaBD"/>
</dbReference>
<dbReference type="PANTHER" id="PTHR47659:SF8">
    <property type="entry name" value="GLUCOSE STARVATION MODULATOR PROTEIN 1"/>
    <property type="match status" value="1"/>
</dbReference>
<dbReference type="PANTHER" id="PTHR47659">
    <property type="entry name" value="ZN(II)2CYS6 TRANSCRIPTION FACTOR (EUROFUNG)-RELATED"/>
    <property type="match status" value="1"/>
</dbReference>
<dbReference type="Pfam" id="PF24990">
    <property type="entry name" value="PAS_13"/>
    <property type="match status" value="2"/>
</dbReference>
<dbReference type="Pfam" id="PF00172">
    <property type="entry name" value="Zn_clus"/>
    <property type="match status" value="1"/>
</dbReference>
<dbReference type="SMART" id="SM00066">
    <property type="entry name" value="GAL4"/>
    <property type="match status" value="1"/>
</dbReference>
<dbReference type="SUPFAM" id="SSF55785">
    <property type="entry name" value="PYP-like sensor domain (PAS domain)"/>
    <property type="match status" value="1"/>
</dbReference>
<dbReference type="SUPFAM" id="SSF57701">
    <property type="entry name" value="Zn2/Cys6 DNA-binding domain"/>
    <property type="match status" value="1"/>
</dbReference>
<dbReference type="PROSITE" id="PS50112">
    <property type="entry name" value="PAS"/>
    <property type="match status" value="1"/>
</dbReference>
<dbReference type="PROSITE" id="PS00463">
    <property type="entry name" value="ZN2_CY6_FUNGAL_1"/>
    <property type="match status" value="1"/>
</dbReference>
<dbReference type="PROSITE" id="PS50048">
    <property type="entry name" value="ZN2_CY6_FUNGAL_2"/>
    <property type="match status" value="1"/>
</dbReference>
<feature type="chain" id="PRO_0000406486" description="Glucose starvation modulator protein 1">
    <location>
        <begin position="1"/>
        <end position="579"/>
    </location>
</feature>
<feature type="domain" description="PAS" evidence="2">
    <location>
        <begin position="444"/>
        <end position="516"/>
    </location>
</feature>
<feature type="DNA-binding region" description="Zn(2)-C6 fungal-type" evidence="3">
    <location>
        <begin position="20"/>
        <end position="48"/>
    </location>
</feature>
<feature type="region of interest" description="Disordered" evidence="4">
    <location>
        <begin position="43"/>
        <end position="75"/>
    </location>
</feature>
<feature type="region of interest" description="Disordered" evidence="4">
    <location>
        <begin position="319"/>
        <end position="342"/>
    </location>
</feature>
<feature type="compositionally biased region" description="Basic and acidic residues" evidence="4">
    <location>
        <begin position="43"/>
        <end position="53"/>
    </location>
</feature>
<feature type="compositionally biased region" description="Basic residues" evidence="4">
    <location>
        <begin position="54"/>
        <end position="64"/>
    </location>
</feature>
<feature type="compositionally biased region" description="Polar residues" evidence="4">
    <location>
        <begin position="330"/>
        <end position="339"/>
    </location>
</feature>
<protein>
    <recommendedName>
        <fullName>Glucose starvation modulator protein 1</fullName>
    </recommendedName>
</protein>
<organism>
    <name type="scientific">Kluyveromyces lactis (strain ATCC 8585 / CBS 2359 / DSM 70799 / NBRC 1267 / NRRL Y-1140 / WM37)</name>
    <name type="common">Yeast</name>
    <name type="synonym">Candida sphaerica</name>
    <dbReference type="NCBI Taxonomy" id="284590"/>
    <lineage>
        <taxon>Eukaryota</taxon>
        <taxon>Fungi</taxon>
        <taxon>Dikarya</taxon>
        <taxon>Ascomycota</taxon>
        <taxon>Saccharomycotina</taxon>
        <taxon>Saccharomycetes</taxon>
        <taxon>Saccharomycetales</taxon>
        <taxon>Saccharomycetaceae</taxon>
        <taxon>Kluyveromyces</taxon>
    </lineage>
</organism>
<sequence length="579" mass="65394">MTKKLTAQEKLNRKPIPTACVFCHEKHLQCDLGRPCQNCSKRGIGDTCRDKERKPRKRGPRKVKKEREVSASTKSEISNTINQQLIPVINTATAVSNRQNSSKIIKAKQTGVSTKKTRISKLAMDSLPLQMPVINSPSDMFGKQKKVMSPELPKIPSLTQLFNPTAEPIISDALLPSNQNSAANLPSLADKTPLEEFKNKPLSERAPQQGPQQPAQQLLPIPEKLNSDHTSSNSSTGEFGSVWTTEEYTKLNDMLSTPNLSRNNSKTYLNSNIAWSPSNMMKMDPITESQRPINTQELLNLTSNGLKRTHSRPHISLDQMASESKRHSANDTSPESQGGETVENLSPYRFRLLVKTPEDLYKHQALIQPHNYKSAYLELLRFLRWRFINSDKPSSGKSQRDGPEQLQNIAHSIKTHYAPIFVTLTNSLIAQDLKLQEIILQRALLEYESMAKLVNCTPMCIWRRSGEICFASNEFISLTGFNKKEILNKRKFIMEFMDNESIVDYYDIFHEYLAFGSTQSGPFNSSTGTSDGQAIFSECNLLLKNGCYLRCACIWTVKRDAFNIPMLIMGQFLPIFDIE</sequence>
<accession>Q6CK33</accession>
<evidence type="ECO:0000250" key="1"/>
<evidence type="ECO:0000255" key="2">
    <source>
        <dbReference type="PROSITE-ProRule" id="PRU00140"/>
    </source>
</evidence>
<evidence type="ECO:0000255" key="3">
    <source>
        <dbReference type="PROSITE-ProRule" id="PRU00227"/>
    </source>
</evidence>
<evidence type="ECO:0000256" key="4">
    <source>
        <dbReference type="SAM" id="MobiDB-lite"/>
    </source>
</evidence>
<evidence type="ECO:0000305" key="5"/>
<comment type="function">
    <text evidence="1">Transcription factor which regulates nonfermentable carbon utilization.</text>
</comment>
<comment type="subcellular location">
    <subcellularLocation>
        <location evidence="3">Nucleus</location>
    </subcellularLocation>
</comment>
<comment type="similarity">
    <text evidence="5">Belongs to the ERT1/acuK family.</text>
</comment>
<keyword id="KW-0238">DNA-binding</keyword>
<keyword id="KW-0479">Metal-binding</keyword>
<keyword id="KW-0539">Nucleus</keyword>
<keyword id="KW-1185">Reference proteome</keyword>
<keyword id="KW-0804">Transcription</keyword>
<keyword id="KW-0805">Transcription regulation</keyword>
<keyword id="KW-0862">Zinc</keyword>
<gene>
    <name type="primary">GSM1</name>
    <name type="ordered locus">KLLA0F13904g</name>
</gene>
<name>GSM1_KLULA</name>